<gene>
    <name evidence="1" type="primary">rps15</name>
    <name type="ordered locus">MmarC5_1830</name>
</gene>
<sequence>MARLHSGKRGSSGSTRPLRTEVPEWVSMSAEEIEAKIVEMAKDGKQSAIIGNILRDMYGVPNVKLITGKSVSSIMKEAGFYAEVPEDLFNLMKKAINLRNHLENNPRDTHSTVGLKLIESKIRRLVKYYRGTKVLPAKWRYSPETARLLVE</sequence>
<organism>
    <name type="scientific">Methanococcus maripaludis (strain C5 / ATCC BAA-1333)</name>
    <dbReference type="NCBI Taxonomy" id="402880"/>
    <lineage>
        <taxon>Archaea</taxon>
        <taxon>Methanobacteriati</taxon>
        <taxon>Methanobacteriota</taxon>
        <taxon>Methanomada group</taxon>
        <taxon>Methanococci</taxon>
        <taxon>Methanococcales</taxon>
        <taxon>Methanococcaceae</taxon>
        <taxon>Methanococcus</taxon>
    </lineage>
</organism>
<evidence type="ECO:0000255" key="1">
    <source>
        <dbReference type="HAMAP-Rule" id="MF_01343"/>
    </source>
</evidence>
<evidence type="ECO:0000256" key="2">
    <source>
        <dbReference type="SAM" id="MobiDB-lite"/>
    </source>
</evidence>
<evidence type="ECO:0000305" key="3"/>
<accession>A4G0Z3</accession>
<reference key="1">
    <citation type="submission" date="2007-03" db="EMBL/GenBank/DDBJ databases">
        <title>Complete sequence of chromosome of Methanococcus maripaludis C5.</title>
        <authorList>
            <consortium name="US DOE Joint Genome Institute"/>
            <person name="Copeland A."/>
            <person name="Lucas S."/>
            <person name="Lapidus A."/>
            <person name="Barry K."/>
            <person name="Glavina del Rio T."/>
            <person name="Dalin E."/>
            <person name="Tice H."/>
            <person name="Pitluck S."/>
            <person name="Chertkov O."/>
            <person name="Brettin T."/>
            <person name="Bruce D."/>
            <person name="Han C."/>
            <person name="Detter J.C."/>
            <person name="Schmutz J."/>
            <person name="Larimer F."/>
            <person name="Land M."/>
            <person name="Hauser L."/>
            <person name="Kyrpides N."/>
            <person name="Mikhailova N."/>
            <person name="Sieprawska-Lupa M."/>
            <person name="Whitman W.B."/>
            <person name="Richardson P."/>
        </authorList>
    </citation>
    <scope>NUCLEOTIDE SEQUENCE [LARGE SCALE GENOMIC DNA]</scope>
    <source>
        <strain>C5 / ATCC BAA-1333</strain>
    </source>
</reference>
<feature type="chain" id="PRO_1000054813" description="Small ribosomal subunit protein uS15">
    <location>
        <begin position="1"/>
        <end position="151"/>
    </location>
</feature>
<feature type="region of interest" description="Disordered" evidence="2">
    <location>
        <begin position="1"/>
        <end position="20"/>
    </location>
</feature>
<comment type="subunit">
    <text evidence="1">Part of the 30S ribosomal subunit.</text>
</comment>
<comment type="similarity">
    <text evidence="1">Belongs to the universal ribosomal protein uS15 family.</text>
</comment>
<protein>
    <recommendedName>
        <fullName evidence="1">Small ribosomal subunit protein uS15</fullName>
    </recommendedName>
    <alternativeName>
        <fullName evidence="3">30S ribosomal protein S15</fullName>
    </alternativeName>
</protein>
<keyword id="KW-0687">Ribonucleoprotein</keyword>
<keyword id="KW-0689">Ribosomal protein</keyword>
<dbReference type="EMBL" id="CP000609">
    <property type="protein sequence ID" value="ABO36127.1"/>
    <property type="molecule type" value="Genomic_DNA"/>
</dbReference>
<dbReference type="RefSeq" id="WP_011869572.1">
    <property type="nucleotide sequence ID" value="NC_009135.1"/>
</dbReference>
<dbReference type="SMR" id="A4G0Z3"/>
<dbReference type="STRING" id="402880.MmarC5_1830"/>
<dbReference type="GeneID" id="4927774"/>
<dbReference type="KEGG" id="mmq:MmarC5_1830"/>
<dbReference type="eggNOG" id="arCOG04185">
    <property type="taxonomic scope" value="Archaea"/>
</dbReference>
<dbReference type="HOGENOM" id="CLU_090139_2_0_2"/>
<dbReference type="OrthoDB" id="6533at2157"/>
<dbReference type="Proteomes" id="UP000000253">
    <property type="component" value="Chromosome"/>
</dbReference>
<dbReference type="GO" id="GO:0022627">
    <property type="term" value="C:cytosolic small ribosomal subunit"/>
    <property type="evidence" value="ECO:0007669"/>
    <property type="project" value="TreeGrafter"/>
</dbReference>
<dbReference type="GO" id="GO:0070181">
    <property type="term" value="F:small ribosomal subunit rRNA binding"/>
    <property type="evidence" value="ECO:0007669"/>
    <property type="project" value="TreeGrafter"/>
</dbReference>
<dbReference type="GO" id="GO:0003735">
    <property type="term" value="F:structural constituent of ribosome"/>
    <property type="evidence" value="ECO:0007669"/>
    <property type="project" value="InterPro"/>
</dbReference>
<dbReference type="GO" id="GO:0006412">
    <property type="term" value="P:translation"/>
    <property type="evidence" value="ECO:0007669"/>
    <property type="project" value="UniProtKB-UniRule"/>
</dbReference>
<dbReference type="CDD" id="cd00353">
    <property type="entry name" value="Ribosomal_S15p_S13e"/>
    <property type="match status" value="1"/>
</dbReference>
<dbReference type="FunFam" id="1.10.287.10:FF:000003">
    <property type="entry name" value="40S ribosomal protein S13"/>
    <property type="match status" value="1"/>
</dbReference>
<dbReference type="Gene3D" id="4.10.860.130">
    <property type="match status" value="1"/>
</dbReference>
<dbReference type="Gene3D" id="1.10.287.10">
    <property type="entry name" value="S15/NS1, RNA-binding"/>
    <property type="match status" value="1"/>
</dbReference>
<dbReference type="HAMAP" id="MF_01343_A">
    <property type="entry name" value="Ribosomal_uS15_A"/>
    <property type="match status" value="1"/>
</dbReference>
<dbReference type="InterPro" id="IPR000589">
    <property type="entry name" value="Ribosomal_uS15"/>
</dbReference>
<dbReference type="InterPro" id="IPR023029">
    <property type="entry name" value="Ribosomal_uS15_arc_euk"/>
</dbReference>
<dbReference type="InterPro" id="IPR012606">
    <property type="entry name" value="Ribosomal_uS15_N"/>
</dbReference>
<dbReference type="InterPro" id="IPR009068">
    <property type="entry name" value="uS15_NS1_RNA-bd_sf"/>
</dbReference>
<dbReference type="NCBIfam" id="NF006331">
    <property type="entry name" value="PRK08561.1"/>
    <property type="match status" value="1"/>
</dbReference>
<dbReference type="PANTHER" id="PTHR11885">
    <property type="entry name" value="RIBOSOMAL PROTEIN S15P/S13E"/>
    <property type="match status" value="1"/>
</dbReference>
<dbReference type="PANTHER" id="PTHR11885:SF6">
    <property type="entry name" value="SMALL RIBOSOMAL SUBUNIT PROTEIN US15"/>
    <property type="match status" value="1"/>
</dbReference>
<dbReference type="Pfam" id="PF08069">
    <property type="entry name" value="Ribosomal_S13_N"/>
    <property type="match status" value="1"/>
</dbReference>
<dbReference type="Pfam" id="PF00312">
    <property type="entry name" value="Ribosomal_S15"/>
    <property type="match status" value="1"/>
</dbReference>
<dbReference type="SMART" id="SM01386">
    <property type="entry name" value="Ribosomal_S13_N"/>
    <property type="match status" value="1"/>
</dbReference>
<dbReference type="SMART" id="SM01387">
    <property type="entry name" value="Ribosomal_S15"/>
    <property type="match status" value="1"/>
</dbReference>
<dbReference type="SUPFAM" id="SSF47060">
    <property type="entry name" value="S15/NS1 RNA-binding domain"/>
    <property type="match status" value="1"/>
</dbReference>
<dbReference type="PROSITE" id="PS00362">
    <property type="entry name" value="RIBOSOMAL_S15"/>
    <property type="match status" value="1"/>
</dbReference>
<name>RS15_METM5</name>
<proteinExistence type="inferred from homology"/>